<evidence type="ECO:0000250" key="1">
    <source>
        <dbReference type="UniProtKB" id="Q9NWB6"/>
    </source>
</evidence>
<evidence type="ECO:0000256" key="2">
    <source>
        <dbReference type="SAM" id="MobiDB-lite"/>
    </source>
</evidence>
<evidence type="ECO:0000305" key="3"/>
<evidence type="ECO:0000312" key="4">
    <source>
        <dbReference type="Proteomes" id="UP000008143"/>
    </source>
</evidence>
<protein>
    <recommendedName>
        <fullName>Arginine and glutamate-rich protein 1</fullName>
    </recommendedName>
</protein>
<proteinExistence type="evidence at transcript level"/>
<dbReference type="EMBL" id="BC064271">
    <property type="protein sequence ID" value="AAH64271.1"/>
    <property type="molecule type" value="mRNA"/>
</dbReference>
<dbReference type="RefSeq" id="NP_989280.1">
    <property type="nucleotide sequence ID" value="NM_203949.1"/>
</dbReference>
<dbReference type="SMR" id="Q6P2W5"/>
<dbReference type="FunCoup" id="Q6P2W5">
    <property type="interactions" value="3654"/>
</dbReference>
<dbReference type="STRING" id="8364.ENSXETP00000018183"/>
<dbReference type="PaxDb" id="8364-ENSXETP00000003278"/>
<dbReference type="GeneID" id="394894"/>
<dbReference type="KEGG" id="xtr:394894"/>
<dbReference type="AGR" id="Xenbase:XB-GENE-5857929"/>
<dbReference type="CTD" id="55082"/>
<dbReference type="Xenbase" id="XB-GENE-5857929">
    <property type="gene designation" value="arglu1"/>
</dbReference>
<dbReference type="eggNOG" id="ENOG502QPR5">
    <property type="taxonomic scope" value="Eukaryota"/>
</dbReference>
<dbReference type="HOGENOM" id="CLU_076749_0_0_1"/>
<dbReference type="InParanoid" id="Q6P2W5"/>
<dbReference type="OMA" id="VNSHGRH"/>
<dbReference type="PhylomeDB" id="Q6P2W5"/>
<dbReference type="TreeFam" id="TF324123"/>
<dbReference type="Proteomes" id="UP000008143">
    <property type="component" value="Chromosome 2"/>
</dbReference>
<dbReference type="ExpressionAtlas" id="Q6P2W5">
    <property type="expression patterns" value="baseline"/>
</dbReference>
<dbReference type="GO" id="GO:0005694">
    <property type="term" value="C:chromosome"/>
    <property type="evidence" value="ECO:0007669"/>
    <property type="project" value="UniProtKB-SubCell"/>
</dbReference>
<dbReference type="GO" id="GO:0016607">
    <property type="term" value="C:nuclear speck"/>
    <property type="evidence" value="ECO:0000250"/>
    <property type="project" value="UniProtKB"/>
</dbReference>
<dbReference type="GO" id="GO:0036002">
    <property type="term" value="F:pre-mRNA binding"/>
    <property type="evidence" value="ECO:0000250"/>
    <property type="project" value="UniProtKB"/>
</dbReference>
<dbReference type="GO" id="GO:0003713">
    <property type="term" value="F:transcription coactivator activity"/>
    <property type="evidence" value="ECO:0000250"/>
    <property type="project" value="UniProtKB"/>
</dbReference>
<dbReference type="GO" id="GO:0006397">
    <property type="term" value="P:mRNA processing"/>
    <property type="evidence" value="ECO:0007669"/>
    <property type="project" value="UniProtKB-KW"/>
</dbReference>
<dbReference type="GO" id="GO:0000381">
    <property type="term" value="P:regulation of alternative mRNA splicing, via spliceosome"/>
    <property type="evidence" value="ECO:0000250"/>
    <property type="project" value="UniProtKB"/>
</dbReference>
<dbReference type="GO" id="GO:0008380">
    <property type="term" value="P:RNA splicing"/>
    <property type="evidence" value="ECO:0007669"/>
    <property type="project" value="UniProtKB-KW"/>
</dbReference>
<dbReference type="InterPro" id="IPR033371">
    <property type="entry name" value="ARGLU1"/>
</dbReference>
<dbReference type="PANTHER" id="PTHR31711">
    <property type="entry name" value="ARGININE AND GLUTAMATE-RICH PROTEIN 1"/>
    <property type="match status" value="1"/>
</dbReference>
<dbReference type="PANTHER" id="PTHR31711:SF1">
    <property type="entry name" value="ARGININE AND GLUTAMATE-RICH PROTEIN 1"/>
    <property type="match status" value="1"/>
</dbReference>
<dbReference type="Pfam" id="PF15346">
    <property type="entry name" value="ARGLU"/>
    <property type="match status" value="1"/>
</dbReference>
<name>ARGL1_XENTR</name>
<organism evidence="4">
    <name type="scientific">Xenopus tropicalis</name>
    <name type="common">Western clawed frog</name>
    <name type="synonym">Silurana tropicalis</name>
    <dbReference type="NCBI Taxonomy" id="8364"/>
    <lineage>
        <taxon>Eukaryota</taxon>
        <taxon>Metazoa</taxon>
        <taxon>Chordata</taxon>
        <taxon>Craniata</taxon>
        <taxon>Vertebrata</taxon>
        <taxon>Euteleostomi</taxon>
        <taxon>Amphibia</taxon>
        <taxon>Batrachia</taxon>
        <taxon>Anura</taxon>
        <taxon>Pipoidea</taxon>
        <taxon>Pipidae</taxon>
        <taxon>Xenopodinae</taxon>
        <taxon>Xenopus</taxon>
        <taxon>Silurana</taxon>
    </lineage>
</organism>
<gene>
    <name type="primary">arglu1</name>
</gene>
<reference key="1">
    <citation type="submission" date="2003-12" db="EMBL/GenBank/DDBJ databases">
        <authorList>
            <consortium name="NIH - Xenopus Gene Collection (XGC) project"/>
        </authorList>
    </citation>
    <scope>NUCLEOTIDE SEQUENCE [LARGE SCALE MRNA]</scope>
    <source>
        <tissue>Embryo</tissue>
    </source>
</reference>
<sequence length="265" mass="32139">MGRSRSRSSSRSKHAKSGKHNKKRSRSREKERVRKRSKSRESKRNRRRESRSRSRSNTASRRERERAASPPDRIDIFGRTVSKRSSLDEKQKREDEEKKAEYERQRRIRQQEIEEKLIEEETARRVEELVAKRVEEELEKRKDEIEREVLRRVEEAKRIMEKQLLEELERQRQAELAAQKAREEEERAKREELERILEENNRKIADAQAKLAEEQLKIVEEQRKIHEERMKLEQERQRQQKEEQKIILGKGKSRPKLSFSLKSPD</sequence>
<accession>Q6P2W5</accession>
<comment type="function">
    <text evidence="1">Dual function regulator of gene expression; regulator of transcription and modulator of alternative splicing. General coactivator of nuclear receptor-induced gene expression.</text>
</comment>
<comment type="subcellular location">
    <subcellularLocation>
        <location evidence="1">Nucleus</location>
    </subcellularLocation>
    <subcellularLocation>
        <location evidence="1">Nucleus speckle</location>
    </subcellularLocation>
    <subcellularLocation>
        <location evidence="1">Chromosome</location>
    </subcellularLocation>
</comment>
<comment type="domain">
    <text evidence="1">The N-terminal region can bind RNA; preferentially binds 5'-CGG[AG]GG-3' motifs.</text>
</comment>
<comment type="domain">
    <text evidence="1">The non-classical LXXLL motifs are not required for nuclear receptor coactivator activity.</text>
</comment>
<comment type="domain">
    <text evidence="1">The C-terminal region is necessary and sufficient for regulation of transcription and nuclear receptor coactivator activity. The C-terminal region is not required for RNA binding.</text>
</comment>
<comment type="similarity">
    <text evidence="3">Belongs to the ARGLU1 family.</text>
</comment>
<keyword id="KW-0158">Chromosome</keyword>
<keyword id="KW-0507">mRNA processing</keyword>
<keyword id="KW-0508">mRNA splicing</keyword>
<keyword id="KW-0539">Nucleus</keyword>
<keyword id="KW-1185">Reference proteome</keyword>
<keyword id="KW-0694">RNA-binding</keyword>
<feature type="chain" id="PRO_0000288445" description="Arginine and glutamate-rich protein 1">
    <location>
        <begin position="1"/>
        <end position="265"/>
    </location>
</feature>
<feature type="region of interest" description="Disordered" evidence="2">
    <location>
        <begin position="1"/>
        <end position="106"/>
    </location>
</feature>
<feature type="region of interest" description="Necessary and sufficient for RNA binding" evidence="1">
    <location>
        <begin position="1"/>
        <end position="66"/>
    </location>
</feature>
<feature type="region of interest" description="Necessary and sufficient for transcriptional regulation" evidence="1">
    <location>
        <begin position="67"/>
        <end position="265"/>
    </location>
</feature>
<feature type="region of interest" description="Disordered" evidence="2">
    <location>
        <begin position="229"/>
        <end position="265"/>
    </location>
</feature>
<feature type="short sequence motif" description="LXXLL motif 1; degenerate" evidence="1">
    <location>
        <begin position="164"/>
        <end position="168"/>
    </location>
</feature>
<feature type="short sequence motif" description="LXXLL motif 2; degenerate" evidence="1">
    <location>
        <begin position="193"/>
        <end position="197"/>
    </location>
</feature>
<feature type="compositionally biased region" description="Basic residues" evidence="2">
    <location>
        <begin position="1"/>
        <end position="54"/>
    </location>
</feature>
<feature type="compositionally biased region" description="Basic and acidic residues" evidence="2">
    <location>
        <begin position="60"/>
        <end position="76"/>
    </location>
</feature>
<feature type="compositionally biased region" description="Basic and acidic residues" evidence="2">
    <location>
        <begin position="85"/>
        <end position="106"/>
    </location>
</feature>
<feature type="compositionally biased region" description="Basic and acidic residues" evidence="2">
    <location>
        <begin position="229"/>
        <end position="245"/>
    </location>
</feature>